<accession>A6H5L3</accession>
<dbReference type="EC" id="2.7.7.6" evidence="1"/>
<dbReference type="EMBL" id="AP009339">
    <property type="protein sequence ID" value="BAF64979.1"/>
    <property type="molecule type" value="Genomic_DNA"/>
</dbReference>
<dbReference type="RefSeq" id="YP_001312238.1">
    <property type="nucleotide sequence ID" value="NC_009618.1"/>
</dbReference>
<dbReference type="SMR" id="A6H5L3"/>
<dbReference type="GeneID" id="5309580"/>
<dbReference type="GO" id="GO:0009507">
    <property type="term" value="C:chloroplast"/>
    <property type="evidence" value="ECO:0007669"/>
    <property type="project" value="UniProtKB-SubCell"/>
</dbReference>
<dbReference type="GO" id="GO:0000428">
    <property type="term" value="C:DNA-directed RNA polymerase complex"/>
    <property type="evidence" value="ECO:0007669"/>
    <property type="project" value="UniProtKB-KW"/>
</dbReference>
<dbReference type="GO" id="GO:0005739">
    <property type="term" value="C:mitochondrion"/>
    <property type="evidence" value="ECO:0007669"/>
    <property type="project" value="GOC"/>
</dbReference>
<dbReference type="GO" id="GO:0003677">
    <property type="term" value="F:DNA binding"/>
    <property type="evidence" value="ECO:0007669"/>
    <property type="project" value="UniProtKB-UniRule"/>
</dbReference>
<dbReference type="GO" id="GO:0003899">
    <property type="term" value="F:DNA-directed RNA polymerase activity"/>
    <property type="evidence" value="ECO:0007669"/>
    <property type="project" value="UniProtKB-UniRule"/>
</dbReference>
<dbReference type="GO" id="GO:0046983">
    <property type="term" value="F:protein dimerization activity"/>
    <property type="evidence" value="ECO:0007669"/>
    <property type="project" value="InterPro"/>
</dbReference>
<dbReference type="GO" id="GO:0006351">
    <property type="term" value="P:DNA-templated transcription"/>
    <property type="evidence" value="ECO:0007669"/>
    <property type="project" value="UniProtKB-UniRule"/>
</dbReference>
<dbReference type="CDD" id="cd06928">
    <property type="entry name" value="RNAP_alpha_NTD"/>
    <property type="match status" value="1"/>
</dbReference>
<dbReference type="FunFam" id="2.170.120.12:FF:000001">
    <property type="entry name" value="DNA-directed RNA polymerase subunit alpha"/>
    <property type="match status" value="1"/>
</dbReference>
<dbReference type="Gene3D" id="1.10.150.20">
    <property type="entry name" value="5' to 3' exonuclease, C-terminal subdomain"/>
    <property type="match status" value="1"/>
</dbReference>
<dbReference type="Gene3D" id="2.170.120.12">
    <property type="entry name" value="DNA-directed RNA polymerase, insert domain"/>
    <property type="match status" value="1"/>
</dbReference>
<dbReference type="Gene3D" id="3.30.1360.10">
    <property type="entry name" value="RNA polymerase, RBP11-like subunit"/>
    <property type="match status" value="1"/>
</dbReference>
<dbReference type="HAMAP" id="MF_00059">
    <property type="entry name" value="RNApol_bact_RpoA"/>
    <property type="match status" value="1"/>
</dbReference>
<dbReference type="InterPro" id="IPR011262">
    <property type="entry name" value="DNA-dir_RNA_pol_insert"/>
</dbReference>
<dbReference type="InterPro" id="IPR011263">
    <property type="entry name" value="DNA-dir_RNA_pol_RpoA/D/Rpb3"/>
</dbReference>
<dbReference type="InterPro" id="IPR011773">
    <property type="entry name" value="DNA-dir_RpoA"/>
</dbReference>
<dbReference type="InterPro" id="IPR036603">
    <property type="entry name" value="RBP11-like"/>
</dbReference>
<dbReference type="InterPro" id="IPR011260">
    <property type="entry name" value="RNAP_asu_C"/>
</dbReference>
<dbReference type="InterPro" id="IPR036643">
    <property type="entry name" value="RNApol_insert_sf"/>
</dbReference>
<dbReference type="NCBIfam" id="TIGR02027">
    <property type="entry name" value="rpoA"/>
    <property type="match status" value="1"/>
</dbReference>
<dbReference type="Pfam" id="PF01000">
    <property type="entry name" value="RNA_pol_A_bac"/>
    <property type="match status" value="1"/>
</dbReference>
<dbReference type="Pfam" id="PF03118">
    <property type="entry name" value="RNA_pol_A_CTD"/>
    <property type="match status" value="1"/>
</dbReference>
<dbReference type="Pfam" id="PF01193">
    <property type="entry name" value="RNA_pol_L"/>
    <property type="match status" value="1"/>
</dbReference>
<dbReference type="SMART" id="SM00662">
    <property type="entry name" value="RPOLD"/>
    <property type="match status" value="1"/>
</dbReference>
<dbReference type="SUPFAM" id="SSF47789">
    <property type="entry name" value="C-terminal domain of RNA polymerase alpha subunit"/>
    <property type="match status" value="1"/>
</dbReference>
<dbReference type="SUPFAM" id="SSF56553">
    <property type="entry name" value="Insert subdomain of RNA polymerase alpha subunit"/>
    <property type="match status" value="1"/>
</dbReference>
<dbReference type="SUPFAM" id="SSF55257">
    <property type="entry name" value="RBP11-like subunits of RNA polymerase"/>
    <property type="match status" value="1"/>
</dbReference>
<reference key="1">
    <citation type="journal article" date="2007" name="Mol. Biol. Evol.">
        <title>Chloroplast genome (cpDNA) of Cycas taitungensis and 56 cp protein-coding genes of Gnetum parvifolium: insights into cpDNA evolution and phylogeny of extant seed plants.</title>
        <authorList>
            <person name="Wu C.-S."/>
            <person name="Wang Y.-N."/>
            <person name="Liu S.-M."/>
            <person name="Chaw S.-M."/>
        </authorList>
    </citation>
    <scope>NUCLEOTIDE SEQUENCE [LARGE SCALE GENOMIC DNA]</scope>
</reference>
<protein>
    <recommendedName>
        <fullName evidence="1">DNA-directed RNA polymerase subunit alpha</fullName>
        <shortName evidence="1">PEP</shortName>
        <ecNumber evidence="1">2.7.7.6</ecNumber>
    </recommendedName>
    <alternativeName>
        <fullName evidence="1">Plastid-encoded RNA polymerase subunit alpha</fullName>
        <shortName evidence="1">RNA polymerase subunit alpha</shortName>
    </alternativeName>
</protein>
<evidence type="ECO:0000255" key="1">
    <source>
        <dbReference type="HAMAP-Rule" id="MF_00059"/>
    </source>
</evidence>
<gene>
    <name evidence="1" type="primary">rpoA</name>
</gene>
<name>RPOA_CYCTA</name>
<geneLocation type="chloroplast"/>
<sequence>MIRDEISVSTQTPRWRCIGSGADSKRLHYGRFALSPLRKGQASTIGIAMRRALLGEIEGTCITHAKLEKVTHEYSAIIGIEESVHDILINLKEIVLRSDPYGTREASICIVGPRNVTAQDIILPPSVRIIDATQHIASLTKSITFDIRLWIEKDRGYRIQSPKNYQDGIFPIDAVFMPVRNANYSIHSYGNGNDIQEILFLEIWTNGSLAPREALYRASRNLIDLFIPFLRAEEQNIDGMDNQNGSNMPSFSFSNISADMERMEEEVAFKHIFIDQSELPPRVYNCLGRVNIHTLSDLLNYSQEDLMRIGHFGKKSVEQVSEVLQKHFAVDLPKNKFQIH</sequence>
<comment type="function">
    <text evidence="1">DNA-dependent RNA polymerase catalyzes the transcription of DNA into RNA using the four ribonucleoside triphosphates as substrates.</text>
</comment>
<comment type="catalytic activity">
    <reaction evidence="1">
        <text>RNA(n) + a ribonucleoside 5'-triphosphate = RNA(n+1) + diphosphate</text>
        <dbReference type="Rhea" id="RHEA:21248"/>
        <dbReference type="Rhea" id="RHEA-COMP:14527"/>
        <dbReference type="Rhea" id="RHEA-COMP:17342"/>
        <dbReference type="ChEBI" id="CHEBI:33019"/>
        <dbReference type="ChEBI" id="CHEBI:61557"/>
        <dbReference type="ChEBI" id="CHEBI:140395"/>
        <dbReference type="EC" id="2.7.7.6"/>
    </reaction>
</comment>
<comment type="subunit">
    <text evidence="1">In plastids the minimal PEP RNA polymerase catalytic core is composed of four subunits: alpha, beta, beta', and beta''. When a (nuclear-encoded) sigma factor is associated with the core the holoenzyme is formed, which can initiate transcription.</text>
</comment>
<comment type="subcellular location">
    <subcellularLocation>
        <location>Plastid</location>
        <location>Chloroplast</location>
    </subcellularLocation>
</comment>
<comment type="domain">
    <text evidence="1">The N-terminal domain is essential for RNAP assembly and basal transcription, whereas the C-terminal domain is involved in interaction with transcriptional regulators and with upstream promoter elements.</text>
</comment>
<comment type="similarity">
    <text evidence="1">Belongs to the RNA polymerase alpha chain family.</text>
</comment>
<organism>
    <name type="scientific">Cycas taitungensis</name>
    <name type="common">Prince sago</name>
    <name type="synonym">Cycas taiwaniana</name>
    <dbReference type="NCBI Taxonomy" id="54799"/>
    <lineage>
        <taxon>Eukaryota</taxon>
        <taxon>Viridiplantae</taxon>
        <taxon>Streptophyta</taxon>
        <taxon>Embryophyta</taxon>
        <taxon>Tracheophyta</taxon>
        <taxon>Spermatophyta</taxon>
        <taxon>Cycadidae</taxon>
        <taxon>Cycadales</taxon>
        <taxon>Cycadaceae</taxon>
        <taxon>Cycas</taxon>
    </lineage>
</organism>
<proteinExistence type="inferred from homology"/>
<keyword id="KW-0150">Chloroplast</keyword>
<keyword id="KW-0240">DNA-directed RNA polymerase</keyword>
<keyword id="KW-0548">Nucleotidyltransferase</keyword>
<keyword id="KW-0934">Plastid</keyword>
<keyword id="KW-0804">Transcription</keyword>
<keyword id="KW-0808">Transferase</keyword>
<feature type="chain" id="PRO_0000323668" description="DNA-directed RNA polymerase subunit alpha">
    <location>
        <begin position="1"/>
        <end position="340"/>
    </location>
</feature>
<feature type="region of interest" description="Alpha N-terminal domain (alpha-NTD)" evidence="1">
    <location>
        <begin position="1"/>
        <end position="233"/>
    </location>
</feature>
<feature type="region of interest" description="Alpha C-terminal domain (alpha-CTD)" evidence="1">
    <location>
        <begin position="268"/>
        <end position="340"/>
    </location>
</feature>